<name>LAN6_PYRDE</name>
<organism>
    <name type="scientific">Pyrenophora dematioidea</name>
    <name type="common">Helminthosporium dematioideum</name>
    <dbReference type="NCBI Taxonomy" id="139229"/>
    <lineage>
        <taxon>Eukaryota</taxon>
        <taxon>Fungi</taxon>
        <taxon>Dikarya</taxon>
        <taxon>Ascomycota</taxon>
        <taxon>Pezizomycotina</taxon>
        <taxon>Dothideomycetes</taxon>
        <taxon>Pleosporomycetidae</taxon>
        <taxon>Pleosporales</taxon>
        <taxon>Pleosporineae</taxon>
        <taxon>Pleosporaceae</taxon>
        <taxon>Pyrenophora</taxon>
    </lineage>
</organism>
<comment type="function">
    <text evidence="6 8">Highly reducing polyketide synthase; part of the gene cluster that mediates the biosynthesis of the tetrahydropyranyl antifungal agent lanomycin that acts as an inhibitor of CYP51 and blocks the ergosterol biosynthesis (PubMed:33857369). The biosynthesis probably begins with the formation of an hexaketide, followed by methionine mediated alkylation of C-2 and C-6, and methylation of the reduced C-3 oxygen, pyran forming reductive ring closure, oxygenation of C-4, beta-keto reduction, enoyl reduction and dehydration of the remaining oxygens, and finally, acylation with glycine to complete the biosynthesis (Probable).</text>
</comment>
<comment type="cofactor">
    <cofactor evidence="2">
        <name>pantetheine 4'-phosphate</name>
        <dbReference type="ChEBI" id="CHEBI:47942"/>
    </cofactor>
</comment>
<comment type="pathway">
    <text evidence="9">Antifungal biosynthesis.</text>
</comment>
<comment type="domain">
    <text evidence="9">Multidomain protein; including a ketosynthase (KS) that catalyzes repeated decarboxylative condensation to elongate the polyketide backbone; a malonyl-CoA:ACP transacylase (MAT) that selects and transfers the extender unit malonyl-CoA; a dehydratase (DH) domain that reduces hydroxyl groups to enoyl groups; a methyltransferase (CMeT) domain responsible for the incorporation of methyl groups; an enoylreductase (ER) domain that reduces enoyl groups to alkyl group; a ketoreductase (KR) domain that catalyzes beta-ketoreduction steps; and an acyl-carrier protein (ACP) that serves as the tether of the growing and completed polyketide via its phosphopantetheinyl arm.</text>
</comment>
<accession>P0DXV8</accession>
<keyword id="KW-0012">Acyltransferase</keyword>
<keyword id="KW-0489">Methyltransferase</keyword>
<keyword id="KW-0511">Multifunctional enzyme</keyword>
<keyword id="KW-0521">NADP</keyword>
<keyword id="KW-0560">Oxidoreductase</keyword>
<keyword id="KW-0596">Phosphopantetheine</keyword>
<keyword id="KW-0597">Phosphoprotein</keyword>
<keyword id="KW-0808">Transferase</keyword>
<protein>
    <recommendedName>
        <fullName evidence="7">Highly reducing polyketide synthase</fullName>
        <shortName evidence="7">HR-PKS rstn3</shortName>
        <ecNumber evidence="9">1.-.-.-</ecNumber>
        <ecNumber evidence="9">2.3.1.-</ecNumber>
    </recommendedName>
    <alternativeName>
        <fullName evidence="7">Lanomycin biosynthesis cluster protein 6</fullName>
    </alternativeName>
</protein>
<dbReference type="EC" id="1.-.-.-" evidence="9"/>
<dbReference type="EC" id="2.3.1.-" evidence="9"/>
<dbReference type="EMBL" id="MW768702">
    <property type="protein sequence ID" value="QUF61546.1"/>
    <property type="molecule type" value="Genomic_DNA"/>
</dbReference>
<dbReference type="GO" id="GO:0004315">
    <property type="term" value="F:3-oxoacyl-[acyl-carrier-protein] synthase activity"/>
    <property type="evidence" value="ECO:0007669"/>
    <property type="project" value="InterPro"/>
</dbReference>
<dbReference type="GO" id="GO:0004312">
    <property type="term" value="F:fatty acid synthase activity"/>
    <property type="evidence" value="ECO:0007669"/>
    <property type="project" value="TreeGrafter"/>
</dbReference>
<dbReference type="GO" id="GO:0008168">
    <property type="term" value="F:methyltransferase activity"/>
    <property type="evidence" value="ECO:0007669"/>
    <property type="project" value="UniProtKB-KW"/>
</dbReference>
<dbReference type="GO" id="GO:0016491">
    <property type="term" value="F:oxidoreductase activity"/>
    <property type="evidence" value="ECO:0007669"/>
    <property type="project" value="UniProtKB-KW"/>
</dbReference>
<dbReference type="GO" id="GO:0006633">
    <property type="term" value="P:fatty acid biosynthetic process"/>
    <property type="evidence" value="ECO:0007669"/>
    <property type="project" value="InterPro"/>
</dbReference>
<dbReference type="GO" id="GO:0032259">
    <property type="term" value="P:methylation"/>
    <property type="evidence" value="ECO:0007669"/>
    <property type="project" value="UniProtKB-KW"/>
</dbReference>
<dbReference type="GO" id="GO:0044550">
    <property type="term" value="P:secondary metabolite biosynthetic process"/>
    <property type="evidence" value="ECO:0007669"/>
    <property type="project" value="TreeGrafter"/>
</dbReference>
<dbReference type="CDD" id="cd02440">
    <property type="entry name" value="AdoMet_MTases"/>
    <property type="match status" value="1"/>
</dbReference>
<dbReference type="CDD" id="cd00833">
    <property type="entry name" value="PKS"/>
    <property type="match status" value="1"/>
</dbReference>
<dbReference type="Gene3D" id="3.40.47.10">
    <property type="match status" value="1"/>
</dbReference>
<dbReference type="Gene3D" id="3.40.366.10">
    <property type="entry name" value="Malonyl-Coenzyme A Acyl Carrier Protein, domain 2"/>
    <property type="match status" value="1"/>
</dbReference>
<dbReference type="Gene3D" id="3.90.180.10">
    <property type="entry name" value="Medium-chain alcohol dehydrogenases, catalytic domain"/>
    <property type="match status" value="1"/>
</dbReference>
<dbReference type="Gene3D" id="3.40.50.720">
    <property type="entry name" value="NAD(P)-binding Rossmann-like Domain"/>
    <property type="match status" value="1"/>
</dbReference>
<dbReference type="Gene3D" id="3.10.129.110">
    <property type="entry name" value="Polyketide synthase dehydratase"/>
    <property type="match status" value="1"/>
</dbReference>
<dbReference type="Gene3D" id="3.40.50.150">
    <property type="entry name" value="Vaccinia Virus protein VP39"/>
    <property type="match status" value="1"/>
</dbReference>
<dbReference type="InterPro" id="IPR001227">
    <property type="entry name" value="Ac_transferase_dom_sf"/>
</dbReference>
<dbReference type="InterPro" id="IPR014043">
    <property type="entry name" value="Acyl_transferase_dom"/>
</dbReference>
<dbReference type="InterPro" id="IPR016035">
    <property type="entry name" value="Acyl_Trfase/lysoPLipase"/>
</dbReference>
<dbReference type="InterPro" id="IPR011032">
    <property type="entry name" value="GroES-like_sf"/>
</dbReference>
<dbReference type="InterPro" id="IPR018201">
    <property type="entry name" value="Ketoacyl_synth_AS"/>
</dbReference>
<dbReference type="InterPro" id="IPR014031">
    <property type="entry name" value="Ketoacyl_synth_C"/>
</dbReference>
<dbReference type="InterPro" id="IPR014030">
    <property type="entry name" value="Ketoacyl_synth_N"/>
</dbReference>
<dbReference type="InterPro" id="IPR016036">
    <property type="entry name" value="Malonyl_transacylase_ACP-bd"/>
</dbReference>
<dbReference type="InterPro" id="IPR013217">
    <property type="entry name" value="Methyltransf_12"/>
</dbReference>
<dbReference type="InterPro" id="IPR036291">
    <property type="entry name" value="NAD(P)-bd_dom_sf"/>
</dbReference>
<dbReference type="InterPro" id="IPR032821">
    <property type="entry name" value="PKS_assoc"/>
</dbReference>
<dbReference type="InterPro" id="IPR020841">
    <property type="entry name" value="PKS_Beta-ketoAc_synthase_dom"/>
</dbReference>
<dbReference type="InterPro" id="IPR042104">
    <property type="entry name" value="PKS_dehydratase_sf"/>
</dbReference>
<dbReference type="InterPro" id="IPR020807">
    <property type="entry name" value="PKS_DH"/>
</dbReference>
<dbReference type="InterPro" id="IPR049551">
    <property type="entry name" value="PKS_DH_C"/>
</dbReference>
<dbReference type="InterPro" id="IPR049552">
    <property type="entry name" value="PKS_DH_N"/>
</dbReference>
<dbReference type="InterPro" id="IPR020843">
    <property type="entry name" value="PKS_ER"/>
</dbReference>
<dbReference type="InterPro" id="IPR013968">
    <property type="entry name" value="PKS_KR"/>
</dbReference>
<dbReference type="InterPro" id="IPR049900">
    <property type="entry name" value="PKS_mFAS_DH"/>
</dbReference>
<dbReference type="InterPro" id="IPR050091">
    <property type="entry name" value="PKS_NRPS_Biosynth_Enz"/>
</dbReference>
<dbReference type="InterPro" id="IPR029063">
    <property type="entry name" value="SAM-dependent_MTases_sf"/>
</dbReference>
<dbReference type="InterPro" id="IPR016039">
    <property type="entry name" value="Thiolase-like"/>
</dbReference>
<dbReference type="PANTHER" id="PTHR43775">
    <property type="entry name" value="FATTY ACID SYNTHASE"/>
    <property type="match status" value="1"/>
</dbReference>
<dbReference type="PANTHER" id="PTHR43775:SF50">
    <property type="entry name" value="HIGHLY REDUCING POLYKETIDE SYNTHASE SRDA"/>
    <property type="match status" value="1"/>
</dbReference>
<dbReference type="Pfam" id="PF00698">
    <property type="entry name" value="Acyl_transf_1"/>
    <property type="match status" value="1"/>
</dbReference>
<dbReference type="Pfam" id="PF16197">
    <property type="entry name" value="KAsynt_C_assoc"/>
    <property type="match status" value="1"/>
</dbReference>
<dbReference type="Pfam" id="PF00109">
    <property type="entry name" value="ketoacyl-synt"/>
    <property type="match status" value="1"/>
</dbReference>
<dbReference type="Pfam" id="PF02801">
    <property type="entry name" value="Ketoacyl-synt_C"/>
    <property type="match status" value="1"/>
</dbReference>
<dbReference type="Pfam" id="PF08659">
    <property type="entry name" value="KR"/>
    <property type="match status" value="1"/>
</dbReference>
<dbReference type="Pfam" id="PF08242">
    <property type="entry name" value="Methyltransf_12"/>
    <property type="match status" value="1"/>
</dbReference>
<dbReference type="Pfam" id="PF21089">
    <property type="entry name" value="PKS_DH_N"/>
    <property type="match status" value="1"/>
</dbReference>
<dbReference type="Pfam" id="PF14765">
    <property type="entry name" value="PS-DH"/>
    <property type="match status" value="1"/>
</dbReference>
<dbReference type="SMART" id="SM00827">
    <property type="entry name" value="PKS_AT"/>
    <property type="match status" value="1"/>
</dbReference>
<dbReference type="SMART" id="SM00826">
    <property type="entry name" value="PKS_DH"/>
    <property type="match status" value="1"/>
</dbReference>
<dbReference type="SMART" id="SM00829">
    <property type="entry name" value="PKS_ER"/>
    <property type="match status" value="1"/>
</dbReference>
<dbReference type="SMART" id="SM00822">
    <property type="entry name" value="PKS_KR"/>
    <property type="match status" value="1"/>
</dbReference>
<dbReference type="SMART" id="SM00825">
    <property type="entry name" value="PKS_KS"/>
    <property type="match status" value="1"/>
</dbReference>
<dbReference type="SUPFAM" id="SSF52151">
    <property type="entry name" value="FabD/lysophospholipase-like"/>
    <property type="match status" value="1"/>
</dbReference>
<dbReference type="SUPFAM" id="SSF50129">
    <property type="entry name" value="GroES-like"/>
    <property type="match status" value="1"/>
</dbReference>
<dbReference type="SUPFAM" id="SSF51735">
    <property type="entry name" value="NAD(P)-binding Rossmann-fold domains"/>
    <property type="match status" value="1"/>
</dbReference>
<dbReference type="SUPFAM" id="SSF55048">
    <property type="entry name" value="Probable ACP-binding domain of malonyl-CoA ACP transacylase"/>
    <property type="match status" value="1"/>
</dbReference>
<dbReference type="SUPFAM" id="SSF53335">
    <property type="entry name" value="S-adenosyl-L-methionine-dependent methyltransferases"/>
    <property type="match status" value="1"/>
</dbReference>
<dbReference type="SUPFAM" id="SSF53901">
    <property type="entry name" value="Thiolase-like"/>
    <property type="match status" value="1"/>
</dbReference>
<dbReference type="PROSITE" id="PS50075">
    <property type="entry name" value="CARRIER"/>
    <property type="match status" value="1"/>
</dbReference>
<dbReference type="PROSITE" id="PS00606">
    <property type="entry name" value="KS3_1"/>
    <property type="match status" value="1"/>
</dbReference>
<dbReference type="PROSITE" id="PS52004">
    <property type="entry name" value="KS3_2"/>
    <property type="match status" value="1"/>
</dbReference>
<dbReference type="PROSITE" id="PS52019">
    <property type="entry name" value="PKS_MFAS_DH"/>
    <property type="match status" value="1"/>
</dbReference>
<sequence>MKPYHHPEPIAIVGMACRLPGDIESPSKLWDLLAQERSAQSDVPHNRFNVDSWYHPNKQRPGSIHTRGGYFLSQDDSFRQFDASFFGINPKEAASMDPQQRKLLEVVYESFEAAGARLEDVSGSNTACYVGNFTWDIGQMQARDINHGAPYHMTGGGLTILSNRVNYVFNLKGPSMTIDTACSSTMYALHMACRSLQAGDCSAAVVAGTNLIFGIEQQIASVRLGVLSPTSTCHTFDESADGYARAEAIGALYLKPLSQAMADKDPIRAVIRGTSINANGRSSGISHPSSTDQELVIRQAYASAQLGFEQTGYFECHGTGTPVGDPLEVTAIGNVFGDVRTPESPLLMGSVKTNLGHGEAASAISSLIKTVLCLEKGQIPATLGIKRLNPALDLRDGRLKVVQTLSPWPAAQSYLRASVNSFGYGGANAHAILDAVQSYLGDLYQSIPAPMELKTHSPKQCYLLPFSAHDEQTLNRNIRALSQSLQSGVHLPSLAYTLDSRRSNHSERAFALISTKSDGIQLSEKLSPDSLTFGTAMGSRPELAFVFTGQGAQWAQMGQELVEQYEVVRKTLQNLGATIAGLQNAPDWNLLEALAQPQEKSRINEAELSQPLTTAIQIAMVDLLRSWGVTPVAVVGHSSGEIAAAYCAGHITAKEAIVIAYQRGAATVKSTQRGAMLAVGLGPAEALQVIEDIPNIGIACYNSPDSVTLSGSEKAIEEARKRFLIESIFHRKLKTSGNAYHSNLMEEAGQHYERFLQQSLSRELQSTTESEITMFSSVTETPVETVDLAYWRQNLESAVRFDTATQQLLKSRPEVKIIIEIGPHSALAAPIKAIRTVVGYNSEQLVYLPSLKRNTNSVECLLNLVGSLFLSGFPAPISTVNSASNIGQSPQYFIPDLPIYQWKYGQDIMWAESRMSTDIRFRAYPHHDLLGSRIPGTSNSAPAWRNLISIDSVPWLQDHKVGDSVVFPAAGYVALALEAITQTQGSLTGAYTLRDVNINSAMLLKEGSDTELIFDLHVVVSQQGAYKFVASTVSNGTWTEHATGFVRVGEDYTTNETLRINSTIVGGRGGINKDSYVRRWYSAMNKVGLGYGEAFKTLSNIRANAEYSHATAEVPYNASEGQMAQQSRYAVHPTTLDACLQLSIIAAHNGKPEDLIKAYLPVSISKLTVWPSKIRQDVSLEAFGRGFHRGLRSIQASTGLSTPDGQSLLQAELSFLSLETATKEVDAAKMPQPYTRLIWKPDVDRLTNAQAKALFSQTQADESTAKSYFSSLETLTQLAIRSVVERLPHDLQADSLPGHMQKFFKWLLQENAAISNGALDGLTGEKLIEKIYSIAQSLEQRVPEAAMVAQLNTKMPQIVSGTIGALDVMVENDLLTRIYEDGFGQIGAYARLADFMALMAHKNPRLRILELGAGTGGATRVMLNALEGETSLPKYENYAFTDVSKAFLGVAQETFQAHRHLEFGILDIEHDPASQSFEEHSYDIVFASNVIHATRSVASSLRNCKRLLKPNGKLIIVETTKDWQFTGFMLGALPGYWLGADDGRPYSPFLSKAMWNQVLLDAGFAGADIMLDDYDEPASCTTLIVACNTGEDVRLNENGAKGTNGVNGTNGINSTNSVNVTNDTSGINDTNRMNDNNDMKGMNGGNEGHNTIDTERLNGVKPSTVTLIYRYEPQPIQRAIEREYAQMGITTRSMALEAVTTSLERDARTIMLAELESPLLARMTAAEMTAVQRYTQLATTALWVTNGGVMQGQDPEKSLIFGLAKAIMTEQPSFHLCSLDIDIDNMDLENSNSVSLVMDVERAFHQDPHAEMDTELVEKDGLVYISRYVSDFTENTSFERHLAFKPTMSSVPQGNDALALRFEKVGKANSFYFESQGLRPLTGDEVLIDVDATPLDPLSIDALMGKSSSLSFGMILAGTVRAVGFKTRKLEVGDYVCCLYPHHFDTAVIMHERDCEIIVSEERTGNLLGQIYPSIISLHVASSLRLDRGDHVLIDCQQVHLAYTFAQVALLRAIGVDVTFYSDAGLDKLKHLLGDKAKLISREEALKQASSANFFDAVLTDANDGFQLLVNVARPGGRILALGSSPPTDMIHAAPYFLKKGVTMGMFDPMDGFATNLTQQSKVTSNDGNHDASPELTQSRSLLAEALGLLHHGSIRPLPCERFDLARLPEAISKVAQGDSVGSVVLTRTPDTRVPVHAAEDLLMFNPEASYLLVGCLGGLGRSLTAWMVSRGARHFIFLSRSGADKPEAAALVDELHELARSKYPDLSVQVIRGDVSARDDVKRAISCATKPIKGVVQAAMVLKDKLFSEMSLDDFNKVVHPKMLGSLHLHELLLNHDLDFFVMTSSVLGAIGAAMQSNYSAANAYLDHMARHRRSMGLQAMSMALGMIVDVGHVEEHPEVEKALKRNGLYGISVDEYLINMELACRRQDLSNPIPPQSPYRYDAGAAAHIVTGMDPTRLSRAGGKSLWLKDNRLRNIVVGLGDASGEDERNAENATGVNTAKLLESARAEGGTTAVKSVVLGLVLARFSKLVLLPVEKIDP</sequence>
<gene>
    <name evidence="7" type="primary">ORF6</name>
</gene>
<reference key="1">
    <citation type="journal article" date="2021" name="J. Am. Chem. Soc.">
        <title>Targeted genome mining reveals the biosynthetic gene clusters of natural product CYP51 inhibitors.</title>
        <authorList>
            <person name="Liu N."/>
            <person name="Abramyan E.D."/>
            <person name="Cheng W."/>
            <person name="Perlatti B."/>
            <person name="Harvey C.J.B."/>
            <person name="Bills G.F."/>
            <person name="Tang Y."/>
        </authorList>
    </citation>
    <scope>NUCLEOTIDE SEQUENCE [GENOMIC DNA]</scope>
    <scope>FUNCTION</scope>
    <scope>PATHWAY</scope>
    <source>
        <strain>TTI-1096</strain>
    </source>
</reference>
<proteinExistence type="predicted"/>
<feature type="chain" id="PRO_0000461547" description="Highly reducing polyketide synthase">
    <location>
        <begin position="1"/>
        <end position="2542"/>
    </location>
</feature>
<feature type="domain" description="Ketosynthase family 3 (KS3)" evidence="3">
    <location>
        <begin position="7"/>
        <end position="435"/>
    </location>
</feature>
<feature type="domain" description="Malonyl-CoA:ACP transacylase (MAT)" evidence="1">
    <location>
        <begin position="545"/>
        <end position="872"/>
    </location>
</feature>
<feature type="domain" description="PKS/mFAS DH" evidence="4">
    <location>
        <begin position="927"/>
        <end position="1224"/>
    </location>
</feature>
<feature type="domain" description="Enoyl reductase (ER)" evidence="1">
    <location>
        <begin position="1866"/>
        <end position="2186"/>
    </location>
</feature>
<feature type="domain" description="Ketoreductase (KR)" evidence="1">
    <location>
        <begin position="2209"/>
        <end position="2389"/>
    </location>
</feature>
<feature type="region of interest" description="N-terminal hotdog fold" evidence="4">
    <location>
        <begin position="927"/>
        <end position="1062"/>
    </location>
</feature>
<feature type="region of interest" description="C-terminal hotdog fold" evidence="4">
    <location>
        <begin position="1072"/>
        <end position="1224"/>
    </location>
</feature>
<feature type="region of interest" description="Methyltransferase (CMet) domain" evidence="1">
    <location>
        <begin position="1275"/>
        <end position="1574"/>
    </location>
</feature>
<feature type="region of interest" description="Disordered" evidence="5">
    <location>
        <begin position="1606"/>
        <end position="1634"/>
    </location>
</feature>
<feature type="active site" description="For beta-ketoacyl synthase activity" evidence="3">
    <location>
        <position position="182"/>
    </location>
</feature>
<feature type="active site" description="For beta-ketoacyl synthase activity" evidence="3">
    <location>
        <position position="317"/>
    </location>
</feature>
<feature type="active site" description="For beta-ketoacyl synthase activity" evidence="3">
    <location>
        <position position="357"/>
    </location>
</feature>
<feature type="active site" description="Proton acceptor; for dehydratase activity" evidence="4">
    <location>
        <position position="959"/>
    </location>
</feature>
<feature type="active site" description="Proton donor; for dehydratase activity" evidence="4">
    <location>
        <position position="1137"/>
    </location>
</feature>
<evidence type="ECO:0000255" key="1"/>
<evidence type="ECO:0000255" key="2">
    <source>
        <dbReference type="PROSITE-ProRule" id="PRU00258"/>
    </source>
</evidence>
<evidence type="ECO:0000255" key="3">
    <source>
        <dbReference type="PROSITE-ProRule" id="PRU01348"/>
    </source>
</evidence>
<evidence type="ECO:0000255" key="4">
    <source>
        <dbReference type="PROSITE-ProRule" id="PRU01363"/>
    </source>
</evidence>
<evidence type="ECO:0000256" key="5">
    <source>
        <dbReference type="SAM" id="MobiDB-lite"/>
    </source>
</evidence>
<evidence type="ECO:0000269" key="6">
    <source>
    </source>
</evidence>
<evidence type="ECO:0000303" key="7">
    <source>
    </source>
</evidence>
<evidence type="ECO:0000305" key="8"/>
<evidence type="ECO:0000305" key="9">
    <source>
    </source>
</evidence>